<proteinExistence type="evidence at protein level"/>
<name>PLAS1_ARATH</name>
<gene>
    <name type="primary">PETE</name>
    <name type="ordered locus">At1g76100</name>
    <name type="ORF">T23E18.3</name>
    <name type="ORF">T23E18_39</name>
</gene>
<comment type="function">
    <text>Participates in electron transfer between P700 and the cytochrome b6-f complex in photosystem I. Seems to be a minor plastocyanin in Arabidopsis.</text>
</comment>
<comment type="cofactor">
    <cofactor evidence="1">
        <name>Cu(2+)</name>
        <dbReference type="ChEBI" id="CHEBI:29036"/>
    </cofactor>
</comment>
<comment type="subcellular location">
    <subcellularLocation>
        <location evidence="3">Plastid</location>
        <location evidence="3">Chloroplast thylakoid membrane</location>
        <topology evidence="3">Peripheral membrane protein</topology>
        <orientation evidence="3">Lumenal side</orientation>
    </subcellularLocation>
    <text>Loosely bound to the inner thylakoid membrane surface in chloroplasts.</text>
</comment>
<comment type="similarity">
    <text evidence="4">Belongs to the plastocyanin family.</text>
</comment>
<comment type="sequence caution" evidence="4">
    <conflict type="erroneous initiation">
        <sequence resource="EMBL-CDS" id="AAF17650"/>
    </conflict>
</comment>
<organism>
    <name type="scientific">Arabidopsis thaliana</name>
    <name type="common">Mouse-ear cress</name>
    <dbReference type="NCBI Taxonomy" id="3702"/>
    <lineage>
        <taxon>Eukaryota</taxon>
        <taxon>Viridiplantae</taxon>
        <taxon>Streptophyta</taxon>
        <taxon>Embryophyta</taxon>
        <taxon>Tracheophyta</taxon>
        <taxon>Spermatophyta</taxon>
        <taxon>Magnoliopsida</taxon>
        <taxon>eudicotyledons</taxon>
        <taxon>Gunneridae</taxon>
        <taxon>Pentapetalae</taxon>
        <taxon>rosids</taxon>
        <taxon>malvids</taxon>
        <taxon>Brassicales</taxon>
        <taxon>Brassicaceae</taxon>
        <taxon>Camelineae</taxon>
        <taxon>Arabidopsis</taxon>
    </lineage>
</organism>
<reference key="1">
    <citation type="journal article" date="1988" name="Gene">
        <title>Plastocyanin of Arabidopsis thaliana; isolation and characterization of the gene and chloroplast import of the precursor protein.</title>
        <authorList>
            <person name="Vorst O."/>
            <person name="Oosterhoff-Teertstra R."/>
            <person name="Vankan P."/>
            <person name="Smeekens S."/>
            <person name="Weisbeek P.J."/>
        </authorList>
    </citation>
    <scope>NUCLEOTIDE SEQUENCE [GENOMIC DNA]</scope>
</reference>
<reference key="2">
    <citation type="journal article" date="1997" name="Nucleic Acids Res.">
        <title>Analysis of the chromatin domain organisation around the plastocyanin gene reveals an MAR-specific sequence element in Arabidopsis thaliana.</title>
        <authorList>
            <person name="van Drunen C.M."/>
            <person name="Oosterling R.W."/>
            <person name="Keultjes G.M."/>
            <person name="Weisbeek P.J."/>
            <person name="van Driel R."/>
            <person name="Smeekens S.C.M."/>
        </authorList>
    </citation>
    <scope>NUCLEOTIDE SEQUENCE [GENOMIC DNA]</scope>
    <source>
        <strain>cv. Columbia</strain>
    </source>
</reference>
<reference key="3">
    <citation type="journal article" date="2000" name="Nature">
        <title>Sequence and analysis of chromosome 1 of the plant Arabidopsis thaliana.</title>
        <authorList>
            <person name="Theologis A."/>
            <person name="Ecker J.R."/>
            <person name="Palm C.J."/>
            <person name="Federspiel N.A."/>
            <person name="Kaul S."/>
            <person name="White O."/>
            <person name="Alonso J."/>
            <person name="Altafi H."/>
            <person name="Araujo R."/>
            <person name="Bowman C.L."/>
            <person name="Brooks S.Y."/>
            <person name="Buehler E."/>
            <person name="Chan A."/>
            <person name="Chao Q."/>
            <person name="Chen H."/>
            <person name="Cheuk R.F."/>
            <person name="Chin C.W."/>
            <person name="Chung M.K."/>
            <person name="Conn L."/>
            <person name="Conway A.B."/>
            <person name="Conway A.R."/>
            <person name="Creasy T.H."/>
            <person name="Dewar K."/>
            <person name="Dunn P."/>
            <person name="Etgu P."/>
            <person name="Feldblyum T.V."/>
            <person name="Feng J.-D."/>
            <person name="Fong B."/>
            <person name="Fujii C.Y."/>
            <person name="Gill J.E."/>
            <person name="Goldsmith A.D."/>
            <person name="Haas B."/>
            <person name="Hansen N.F."/>
            <person name="Hughes B."/>
            <person name="Huizar L."/>
            <person name="Hunter J.L."/>
            <person name="Jenkins J."/>
            <person name="Johnson-Hopson C."/>
            <person name="Khan S."/>
            <person name="Khaykin E."/>
            <person name="Kim C.J."/>
            <person name="Koo H.L."/>
            <person name="Kremenetskaia I."/>
            <person name="Kurtz D.B."/>
            <person name="Kwan A."/>
            <person name="Lam B."/>
            <person name="Langin-Hooper S."/>
            <person name="Lee A."/>
            <person name="Lee J.M."/>
            <person name="Lenz C.A."/>
            <person name="Li J.H."/>
            <person name="Li Y.-P."/>
            <person name="Lin X."/>
            <person name="Liu S.X."/>
            <person name="Liu Z.A."/>
            <person name="Luros J.S."/>
            <person name="Maiti R."/>
            <person name="Marziali A."/>
            <person name="Militscher J."/>
            <person name="Miranda M."/>
            <person name="Nguyen M."/>
            <person name="Nierman W.C."/>
            <person name="Osborne B.I."/>
            <person name="Pai G."/>
            <person name="Peterson J."/>
            <person name="Pham P.K."/>
            <person name="Rizzo M."/>
            <person name="Rooney T."/>
            <person name="Rowley D."/>
            <person name="Sakano H."/>
            <person name="Salzberg S.L."/>
            <person name="Schwartz J.R."/>
            <person name="Shinn P."/>
            <person name="Southwick A.M."/>
            <person name="Sun H."/>
            <person name="Tallon L.J."/>
            <person name="Tambunga G."/>
            <person name="Toriumi M.J."/>
            <person name="Town C.D."/>
            <person name="Utterback T."/>
            <person name="Van Aken S."/>
            <person name="Vaysberg M."/>
            <person name="Vysotskaia V.S."/>
            <person name="Walker M."/>
            <person name="Wu D."/>
            <person name="Yu G."/>
            <person name="Fraser C.M."/>
            <person name="Venter J.C."/>
            <person name="Davis R.W."/>
        </authorList>
    </citation>
    <scope>NUCLEOTIDE SEQUENCE [LARGE SCALE GENOMIC DNA]</scope>
    <source>
        <strain>cv. Columbia</strain>
    </source>
</reference>
<reference key="4">
    <citation type="journal article" date="2017" name="Plant J.">
        <title>Araport11: a complete reannotation of the Arabidopsis thaliana reference genome.</title>
        <authorList>
            <person name="Cheng C.Y."/>
            <person name="Krishnakumar V."/>
            <person name="Chan A.P."/>
            <person name="Thibaud-Nissen F."/>
            <person name="Schobel S."/>
            <person name="Town C.D."/>
        </authorList>
    </citation>
    <scope>GENOME REANNOTATION</scope>
    <source>
        <strain>cv. Columbia</strain>
    </source>
</reference>
<reference key="5">
    <citation type="submission" date="2006-05" db="EMBL/GenBank/DDBJ databases">
        <title>Arabidopsis ORF clones.</title>
        <authorList>
            <person name="Kim C.J."/>
            <person name="Chen H."/>
            <person name="Quinitio C."/>
            <person name="Shinn P."/>
            <person name="Ecker J.R."/>
        </authorList>
    </citation>
    <scope>NUCLEOTIDE SEQUENCE [LARGE SCALE MRNA]</scope>
    <source>
        <strain>cv. Columbia</strain>
    </source>
</reference>
<reference key="6">
    <citation type="submission" date="2006-07" db="EMBL/GenBank/DDBJ databases">
        <title>Large-scale analysis of RIKEN Arabidopsis full-length (RAFL) cDNAs.</title>
        <authorList>
            <person name="Totoki Y."/>
            <person name="Seki M."/>
            <person name="Ishida J."/>
            <person name="Nakajima M."/>
            <person name="Enju A."/>
            <person name="Kamiya A."/>
            <person name="Narusaka M."/>
            <person name="Shin-i T."/>
            <person name="Nakagawa M."/>
            <person name="Sakamoto N."/>
            <person name="Oishi K."/>
            <person name="Kohara Y."/>
            <person name="Kobayashi M."/>
            <person name="Toyoda A."/>
            <person name="Sakaki Y."/>
            <person name="Sakurai T."/>
            <person name="Iida K."/>
            <person name="Akiyama K."/>
            <person name="Satou M."/>
            <person name="Toyoda T."/>
            <person name="Konagaya A."/>
            <person name="Carninci P."/>
            <person name="Kawai J."/>
            <person name="Hayashizaki Y."/>
            <person name="Shinozaki K."/>
        </authorList>
    </citation>
    <scope>NUCLEOTIDE SEQUENCE [LARGE SCALE MRNA]</scope>
    <source>
        <strain>cv. Columbia</strain>
    </source>
</reference>
<reference key="7">
    <citation type="journal article" date="2002" name="J. Biol. Chem.">
        <title>Proteome map of the chloroplast lumen of Arabidopsis thaliana.</title>
        <authorList>
            <person name="Schubert M."/>
            <person name="Petersson U.A."/>
            <person name="Haas B.J."/>
            <person name="Funk C."/>
            <person name="Schroeder W.P."/>
            <person name="Kieselbach T."/>
        </authorList>
    </citation>
    <scope>PROTEIN SEQUENCE OF 73-80</scope>
    <scope>SUBCELLULAR LOCATION</scope>
</reference>
<protein>
    <recommendedName>
        <fullName>Plastocyanin minor isoform, chloroplastic</fullName>
    </recommendedName>
</protein>
<keyword id="KW-0150">Chloroplast</keyword>
<keyword id="KW-0186">Copper</keyword>
<keyword id="KW-0903">Direct protein sequencing</keyword>
<keyword id="KW-0249">Electron transport</keyword>
<keyword id="KW-0472">Membrane</keyword>
<keyword id="KW-0479">Metal-binding</keyword>
<keyword id="KW-0934">Plastid</keyword>
<keyword id="KW-1185">Reference proteome</keyword>
<keyword id="KW-0793">Thylakoid</keyword>
<keyword id="KW-0809">Transit peptide</keyword>
<keyword id="KW-0813">Transport</keyword>
<evidence type="ECO:0000250" key="1">
    <source>
        <dbReference type="UniProtKB" id="P18068"/>
    </source>
</evidence>
<evidence type="ECO:0000255" key="2"/>
<evidence type="ECO:0000269" key="3">
    <source>
    </source>
</evidence>
<evidence type="ECO:0000305" key="4"/>
<dbReference type="EMBL" id="M20937">
    <property type="protein sequence ID" value="AAA32834.1"/>
    <property type="molecule type" value="Genomic_DNA"/>
</dbReference>
<dbReference type="EMBL" id="Z83321">
    <property type="protein sequence ID" value="CAB05911.1"/>
    <property type="molecule type" value="Genomic_DNA"/>
</dbReference>
<dbReference type="EMBL" id="AC009978">
    <property type="protein sequence ID" value="AAF17650.1"/>
    <property type="status" value="ALT_INIT"/>
    <property type="molecule type" value="Genomic_DNA"/>
</dbReference>
<dbReference type="EMBL" id="CP002684">
    <property type="protein sequence ID" value="AEE35796.1"/>
    <property type="molecule type" value="Genomic_DNA"/>
</dbReference>
<dbReference type="EMBL" id="BT021977">
    <property type="protein sequence ID" value="AAY17414.1"/>
    <property type="molecule type" value="mRNA"/>
</dbReference>
<dbReference type="EMBL" id="BT025525">
    <property type="protein sequence ID" value="ABF58943.1"/>
    <property type="molecule type" value="mRNA"/>
</dbReference>
<dbReference type="EMBL" id="AK226194">
    <property type="protein sequence ID" value="BAE98359.1"/>
    <property type="molecule type" value="mRNA"/>
</dbReference>
<dbReference type="PIR" id="JA0065">
    <property type="entry name" value="CUMUM"/>
</dbReference>
<dbReference type="RefSeq" id="NP_001321069.1">
    <property type="nucleotide sequence ID" value="NM_001334709.1"/>
</dbReference>
<dbReference type="RefSeq" id="NP_177737.1">
    <property type="nucleotide sequence ID" value="NM_106259.4"/>
</dbReference>
<dbReference type="SMR" id="P11490"/>
<dbReference type="FunCoup" id="P11490">
    <property type="interactions" value="841"/>
</dbReference>
<dbReference type="STRING" id="3702.P11490"/>
<dbReference type="PaxDb" id="3702-AT1G76100.1"/>
<dbReference type="EnsemblPlants" id="AT1G76100.1">
    <property type="protein sequence ID" value="AT1G76100.1"/>
    <property type="gene ID" value="AT1G76100"/>
</dbReference>
<dbReference type="GeneID" id="843942"/>
<dbReference type="Gramene" id="AT1G76100.1">
    <property type="protein sequence ID" value="AT1G76100.1"/>
    <property type="gene ID" value="AT1G76100"/>
</dbReference>
<dbReference type="KEGG" id="ath:AT1G76100"/>
<dbReference type="Araport" id="AT1G76100"/>
<dbReference type="TAIR" id="AT1G76100">
    <property type="gene designation" value="PETE1"/>
</dbReference>
<dbReference type="eggNOG" id="ENOG502RXIY">
    <property type="taxonomic scope" value="Eukaryota"/>
</dbReference>
<dbReference type="HOGENOM" id="CLU_084115_0_0_1"/>
<dbReference type="InParanoid" id="P11490"/>
<dbReference type="PhylomeDB" id="P11490"/>
<dbReference type="PRO" id="PR:P11490"/>
<dbReference type="Proteomes" id="UP000006548">
    <property type="component" value="Chromosome 1"/>
</dbReference>
<dbReference type="ExpressionAtlas" id="P11490">
    <property type="expression patterns" value="baseline and differential"/>
</dbReference>
<dbReference type="GO" id="GO:0009507">
    <property type="term" value="C:chloroplast"/>
    <property type="evidence" value="ECO:0007005"/>
    <property type="project" value="TAIR"/>
</dbReference>
<dbReference type="GO" id="GO:0009535">
    <property type="term" value="C:chloroplast thylakoid membrane"/>
    <property type="evidence" value="ECO:0007669"/>
    <property type="project" value="UniProtKB-SubCell"/>
</dbReference>
<dbReference type="GO" id="GO:0005739">
    <property type="term" value="C:mitochondrion"/>
    <property type="evidence" value="ECO:0007005"/>
    <property type="project" value="TAIR"/>
</dbReference>
<dbReference type="GO" id="GO:0009579">
    <property type="term" value="C:thylakoid"/>
    <property type="evidence" value="ECO:0007005"/>
    <property type="project" value="TAIR"/>
</dbReference>
<dbReference type="GO" id="GO:0031977">
    <property type="term" value="C:thylakoid lumen"/>
    <property type="evidence" value="ECO:0007005"/>
    <property type="project" value="TAIR"/>
</dbReference>
<dbReference type="GO" id="GO:0005507">
    <property type="term" value="F:copper ion binding"/>
    <property type="evidence" value="ECO:0007669"/>
    <property type="project" value="InterPro"/>
</dbReference>
<dbReference type="GO" id="GO:0009055">
    <property type="term" value="F:electron transfer activity"/>
    <property type="evidence" value="ECO:0007669"/>
    <property type="project" value="InterPro"/>
</dbReference>
<dbReference type="CDD" id="cd04219">
    <property type="entry name" value="Plastocyanin"/>
    <property type="match status" value="1"/>
</dbReference>
<dbReference type="Gene3D" id="2.60.40.420">
    <property type="entry name" value="Cupredoxins - blue copper proteins"/>
    <property type="match status" value="1"/>
</dbReference>
<dbReference type="InterPro" id="IPR000923">
    <property type="entry name" value="BlueCu_1"/>
</dbReference>
<dbReference type="InterPro" id="IPR028871">
    <property type="entry name" value="BlueCu_1_BS"/>
</dbReference>
<dbReference type="InterPro" id="IPR001235">
    <property type="entry name" value="Copper_blue_Plastocyanin"/>
</dbReference>
<dbReference type="InterPro" id="IPR008972">
    <property type="entry name" value="Cupredoxin"/>
</dbReference>
<dbReference type="InterPro" id="IPR002387">
    <property type="entry name" value="Plastocyanin"/>
</dbReference>
<dbReference type="NCBIfam" id="TIGR02656">
    <property type="entry name" value="cyanin_plasto"/>
    <property type="match status" value="1"/>
</dbReference>
<dbReference type="PANTHER" id="PTHR34192">
    <property type="entry name" value="PLASTOCYANIN MAJOR ISOFORM, CHLOROPLASTIC-RELATED"/>
    <property type="match status" value="1"/>
</dbReference>
<dbReference type="PANTHER" id="PTHR34192:SF10">
    <property type="entry name" value="PLASTOCYANIN MAJOR ISOFORM, CHLOROPLASTIC-RELATED"/>
    <property type="match status" value="1"/>
</dbReference>
<dbReference type="Pfam" id="PF00127">
    <property type="entry name" value="Copper-bind"/>
    <property type="match status" value="1"/>
</dbReference>
<dbReference type="PRINTS" id="PR00156">
    <property type="entry name" value="COPPERBLUE"/>
</dbReference>
<dbReference type="PRINTS" id="PR00157">
    <property type="entry name" value="PLASTOCYANIN"/>
</dbReference>
<dbReference type="SUPFAM" id="SSF49503">
    <property type="entry name" value="Cupredoxins"/>
    <property type="match status" value="1"/>
</dbReference>
<dbReference type="PROSITE" id="PS00196">
    <property type="entry name" value="COPPER_BLUE"/>
    <property type="match status" value="1"/>
</dbReference>
<feature type="transit peptide" description="Chloroplast" evidence="2">
    <location>
        <begin position="1"/>
        <end status="unknown"/>
    </location>
</feature>
<feature type="transit peptide" description="Thylakoid" evidence="3">
    <location>
        <begin status="unknown"/>
        <end position="72"/>
    </location>
</feature>
<feature type="chain" id="PRO_0000002884" description="Plastocyanin minor isoform, chloroplastic">
    <location>
        <begin position="73"/>
        <end position="171"/>
    </location>
</feature>
<feature type="domain" description="Plastocyanin-like">
    <location>
        <begin position="73"/>
        <end position="171"/>
    </location>
</feature>
<feature type="binding site" evidence="1">
    <location>
        <position position="109"/>
    </location>
    <ligand>
        <name>Cu cation</name>
        <dbReference type="ChEBI" id="CHEBI:23378"/>
    </ligand>
</feature>
<feature type="binding site" evidence="1">
    <location>
        <position position="156"/>
    </location>
    <ligand>
        <name>Cu cation</name>
        <dbReference type="ChEBI" id="CHEBI:23378"/>
    </ligand>
</feature>
<feature type="binding site" evidence="1">
    <location>
        <position position="159"/>
    </location>
    <ligand>
        <name>Cu cation</name>
        <dbReference type="ChEBI" id="CHEBI:23378"/>
    </ligand>
</feature>
<feature type="binding site" evidence="1">
    <location>
        <position position="164"/>
    </location>
    <ligand>
        <name>Cu cation</name>
        <dbReference type="ChEBI" id="CHEBI:23378"/>
    </ligand>
</feature>
<feature type="sequence conflict" description="In Ref. 1; AAA32834." evidence="4" ref="1">
    <original>T</original>
    <variation>S</variation>
    <location>
        <position position="35"/>
    </location>
</feature>
<sequence>MAAITSATVTIPSFTGLKLAVSSKPKTLSTISRSTSATRAPPKLALKSSLKDFGVIAVATAASIVLAGNAMAMEVLLGSDDGSLAFVPSEFTVAKGEKIVFKNNAGFPHNVVFDEDEIPSGVDASKISMDETALLNGAGETYEVTLTEPGSYGFYCAPHQGAGMVGKLTVK</sequence>
<accession>P11490</accession>
<accession>P93656</accession>
<accession>Q52K91</accession>
<accession>Q9SGS3</accession>